<sequence length="1269" mass="135249">MVRLREIPRTAAFAWSPDTSAPIVVTGTRAGAVDADFSDETKLELWDLKLDDEGQGLELQPIASISADSRFFDIAWGPPNEDHPRGIIAGALENGSLDLWDAEKLLSGASDAHMSRTTKHTGAIKSLQFNPLKPQILATAGTKGELFIYDVNDISNPFRLGTAAARSDDLECVAWNRKVPHILATGGSGGFVTVWDLKTRKASLTLNNSRKAVSAIAWDPNNSTKLLTATPDDTMPVIFLWDLRNSNAPERTLQGHEQGVLSVSWCQQDSDLLISCGKDNRTIVWNPQTGERYGEFPEVTNWTFSARFNPTNPNLSATASFDGKITIQTLQNTNPSATQAAAQNSLDGEDFFTKAQTQPQGASFTLTKAPLWYQRPVGASFGFGGKVVVFKQTQTAPGQPRASEISISHFSVDSEIGSATEKFEESIKAGDLKSICQSHLENAKSEDETTAWKVMETLVAENPRKQVVEYLGLSAEEAPASPESTTEEGAEKEDAEVEPVKESFKKHKKNRLSTFFTEGGDGDDFLAGLAATKGAKTDSPFHLLREGNTGLEDSVTRAIMLGNFAKAVEICIKADRIADAFLIANCGGKELVDQVQTAYISAKKGSPSYLRLLGSVINDNLWDVVYNADIADWKETMATLCTFAKPEEFPDLCEALGDRLFETGSRQDASFCFLVGSKLEKVVGIWIDALEEAEKNEIQEAEADNTFSVHARSLQQLIEKVTVFRHVTKFQDAEASKTSDWKLASLYDKYIEYADIVAAHGQLSIAQKYLELVPASYSGAEVARKRLQLATTKSGAQPAAARAQQAPAAARLPTRQQPVGYQPPQQQPMSTPYGMPPAPQAQTPAANPYGPPAPSPYAPAGATPYQPQQTSYAPPQPAGGAGAYGPTPGVGYGQPQQNFGAPPPPRNATPSALPPSRTVDAGSWNDVPMVTKAPPPRRSTPSVAPVPSPFANQQAGMAPPPQSPYLGQRGTATPPPPPPKAGQGPPRMASPLTSPPQAGYGGAAPPRPASAASSTYAPPPPAPGQSFGMNAPPARTASPYSVAPAAPPPSNRYAPSPAMQQQQGGPGPAGSMPPPPAMSRPPPTNPYAAAPQQSPAPGGQYAPSPYGAPPQAGQPPMAPPPSSQVGPPPGGRGPLSTPTPPPPRAAAAPPAKTKYPPGDRSHIPASAQQLVEILSRDMERVAAKAPASFAPHVKDTQKRLNYLFDHLNNEELVKPDTIGQLNTLAQAIEAKDYAGAQQLQIKIQTEKTEECGQWIVGVKRLISMSKATP</sequence>
<name>SEC31_PYRO7</name>
<reference key="1">
    <citation type="journal article" date="2005" name="Nature">
        <title>The genome sequence of the rice blast fungus Magnaporthe grisea.</title>
        <authorList>
            <person name="Dean R.A."/>
            <person name="Talbot N.J."/>
            <person name="Ebbole D.J."/>
            <person name="Farman M.L."/>
            <person name="Mitchell T.K."/>
            <person name="Orbach M.J."/>
            <person name="Thon M.R."/>
            <person name="Kulkarni R."/>
            <person name="Xu J.-R."/>
            <person name="Pan H."/>
            <person name="Read N.D."/>
            <person name="Lee Y.-H."/>
            <person name="Carbone I."/>
            <person name="Brown D."/>
            <person name="Oh Y.Y."/>
            <person name="Donofrio N."/>
            <person name="Jeong J.S."/>
            <person name="Soanes D.M."/>
            <person name="Djonovic S."/>
            <person name="Kolomiets E."/>
            <person name="Rehmeyer C."/>
            <person name="Li W."/>
            <person name="Harding M."/>
            <person name="Kim S."/>
            <person name="Lebrun M.-H."/>
            <person name="Bohnert H."/>
            <person name="Coughlan S."/>
            <person name="Butler J."/>
            <person name="Calvo S.E."/>
            <person name="Ma L.-J."/>
            <person name="Nicol R."/>
            <person name="Purcell S."/>
            <person name="Nusbaum C."/>
            <person name="Galagan J.E."/>
            <person name="Birren B.W."/>
        </authorList>
    </citation>
    <scope>NUCLEOTIDE SEQUENCE [LARGE SCALE GENOMIC DNA]</scope>
    <source>
        <strain>70-15 / ATCC MYA-4617 / FGSC 8958</strain>
    </source>
</reference>
<evidence type="ECO:0000250" key="1"/>
<evidence type="ECO:0000255" key="2">
    <source>
        <dbReference type="PROSITE-ProRule" id="PRU00221"/>
    </source>
</evidence>
<evidence type="ECO:0000256" key="3">
    <source>
        <dbReference type="SAM" id="MobiDB-lite"/>
    </source>
</evidence>
<evidence type="ECO:0000305" key="4"/>
<accession>A4RD35</accession>
<accession>G4NC93</accession>
<keyword id="KW-0968">Cytoplasmic vesicle</keyword>
<keyword id="KW-0256">Endoplasmic reticulum</keyword>
<keyword id="KW-0931">ER-Golgi transport</keyword>
<keyword id="KW-0472">Membrane</keyword>
<keyword id="KW-0653">Protein transport</keyword>
<keyword id="KW-1185">Reference proteome</keyword>
<keyword id="KW-0677">Repeat</keyword>
<keyword id="KW-0813">Transport</keyword>
<keyword id="KW-0853">WD repeat</keyword>
<comment type="function">
    <text evidence="1">Component of the coat protein complex II (COPII) which promotes the formation of transport vesicles from the endoplasmic reticulum (ER). The coat has two main functions, the physical deformation of the endoplasmic reticulum membrane into vesicles and the selection of cargo molecules (By similarity).</text>
</comment>
<comment type="subunit">
    <text evidence="1">The COPII coat is composed of at least 5 proteins: the SEC23/24 complex, the SEC13/31 complex, and the protein SAR1. SEC13 and SEC31 make a 2:2 tetramer that forms the edge element of the COPII outer coat. The tetramer self-assembles in multiple copies to form the complete polyhedral cage. Interacts (via WD 8) with SEC13 (By similarity).</text>
</comment>
<comment type="subcellular location">
    <subcellularLocation>
        <location evidence="1">Cytoplasmic vesicle</location>
        <location evidence="1">COPII-coated vesicle membrane</location>
        <topology evidence="1">Peripheral membrane protein</topology>
        <orientation evidence="1">Cytoplasmic side</orientation>
    </subcellularLocation>
    <subcellularLocation>
        <location evidence="1">Endoplasmic reticulum membrane</location>
        <topology evidence="1">Peripheral membrane protein</topology>
        <orientation evidence="1">Cytoplasmic side</orientation>
    </subcellularLocation>
</comment>
<comment type="similarity">
    <text evidence="4">Belongs to the WD repeat SEC31 family.</text>
</comment>
<protein>
    <recommendedName>
        <fullName>Protein transport protein SEC31</fullName>
    </recommendedName>
</protein>
<proteinExistence type="inferred from homology"/>
<gene>
    <name type="primary">SEC31</name>
    <name type="ORF">MGG_01108</name>
</gene>
<feature type="chain" id="PRO_0000295440" description="Protein transport protein SEC31">
    <location>
        <begin position="1"/>
        <end position="1269"/>
    </location>
</feature>
<feature type="repeat" description="WD 1">
    <location>
        <begin position="5"/>
        <end position="47"/>
    </location>
</feature>
<feature type="repeat" description="WD 2">
    <location>
        <begin position="66"/>
        <end position="110"/>
    </location>
</feature>
<feature type="repeat" description="WD 3">
    <location>
        <begin position="119"/>
        <end position="159"/>
    </location>
</feature>
<feature type="repeat" description="WD 4">
    <location>
        <begin position="165"/>
        <end position="205"/>
    </location>
</feature>
<feature type="repeat" description="WD 5">
    <location>
        <begin position="208"/>
        <end position="251"/>
    </location>
</feature>
<feature type="repeat" description="WD 6">
    <location>
        <begin position="255"/>
        <end position="295"/>
    </location>
</feature>
<feature type="repeat" description="WD 7">
    <location>
        <begin position="298"/>
        <end position="338"/>
    </location>
</feature>
<feature type="repeat" description="WD 8; interaction with SEC13" evidence="2">
    <location>
        <begin position="380"/>
        <end position="408"/>
    </location>
</feature>
<feature type="region of interest" description="Disordered" evidence="3">
    <location>
        <begin position="474"/>
        <end position="503"/>
    </location>
</feature>
<feature type="region of interest" description="Disordered" evidence="3">
    <location>
        <begin position="792"/>
        <end position="1162"/>
    </location>
</feature>
<feature type="compositionally biased region" description="Acidic residues" evidence="3">
    <location>
        <begin position="485"/>
        <end position="497"/>
    </location>
</feature>
<feature type="compositionally biased region" description="Low complexity" evidence="3">
    <location>
        <begin position="796"/>
        <end position="828"/>
    </location>
</feature>
<feature type="compositionally biased region" description="Gly residues" evidence="3">
    <location>
        <begin position="879"/>
        <end position="892"/>
    </location>
</feature>
<feature type="compositionally biased region" description="Pro residues" evidence="3">
    <location>
        <begin position="933"/>
        <end position="948"/>
    </location>
</feature>
<feature type="compositionally biased region" description="Low complexity" evidence="3">
    <location>
        <begin position="1054"/>
        <end position="1063"/>
    </location>
</feature>
<feature type="compositionally biased region" description="Pro residues" evidence="3">
    <location>
        <begin position="1071"/>
        <end position="1085"/>
    </location>
</feature>
<feature type="compositionally biased region" description="Low complexity" evidence="3">
    <location>
        <begin position="1086"/>
        <end position="1105"/>
    </location>
</feature>
<feature type="compositionally biased region" description="Pro residues" evidence="3">
    <location>
        <begin position="1106"/>
        <end position="1144"/>
    </location>
</feature>
<feature type="compositionally biased region" description="Low complexity" evidence="3">
    <location>
        <begin position="1145"/>
        <end position="1156"/>
    </location>
</feature>
<organism>
    <name type="scientific">Pyricularia oryzae (strain 70-15 / ATCC MYA-4617 / FGSC 8958)</name>
    <name type="common">Rice blast fungus</name>
    <name type="synonym">Magnaporthe oryzae</name>
    <dbReference type="NCBI Taxonomy" id="242507"/>
    <lineage>
        <taxon>Eukaryota</taxon>
        <taxon>Fungi</taxon>
        <taxon>Dikarya</taxon>
        <taxon>Ascomycota</taxon>
        <taxon>Pezizomycotina</taxon>
        <taxon>Sordariomycetes</taxon>
        <taxon>Sordariomycetidae</taxon>
        <taxon>Magnaporthales</taxon>
        <taxon>Pyriculariaceae</taxon>
        <taxon>Pyricularia</taxon>
    </lineage>
</organism>
<dbReference type="EMBL" id="CM001235">
    <property type="protein sequence ID" value="EHA48242.1"/>
    <property type="molecule type" value="Genomic_DNA"/>
</dbReference>
<dbReference type="RefSeq" id="XP_003717826.1">
    <property type="nucleotide sequence ID" value="XM_003717778.1"/>
</dbReference>
<dbReference type="SMR" id="A4RD35"/>
<dbReference type="FunCoup" id="A4RD35">
    <property type="interactions" value="734"/>
</dbReference>
<dbReference type="STRING" id="242507.A4RD35"/>
<dbReference type="EnsemblFungi" id="MGG_01108T0">
    <property type="protein sequence ID" value="MGG_01108T0"/>
    <property type="gene ID" value="MGG_01108"/>
</dbReference>
<dbReference type="GeneID" id="2674815"/>
<dbReference type="KEGG" id="mgr:MGG_01108"/>
<dbReference type="VEuPathDB" id="FungiDB:MGG_01108"/>
<dbReference type="eggNOG" id="KOG0307">
    <property type="taxonomic scope" value="Eukaryota"/>
</dbReference>
<dbReference type="HOGENOM" id="CLU_003033_2_0_1"/>
<dbReference type="InParanoid" id="A4RD35"/>
<dbReference type="OMA" id="WLERPCG"/>
<dbReference type="OrthoDB" id="542917at2759"/>
<dbReference type="Proteomes" id="UP000009058">
    <property type="component" value="Chromosome 5"/>
</dbReference>
<dbReference type="GO" id="GO:0030127">
    <property type="term" value="C:COPII vesicle coat"/>
    <property type="evidence" value="ECO:0007669"/>
    <property type="project" value="TreeGrafter"/>
</dbReference>
<dbReference type="GO" id="GO:0070971">
    <property type="term" value="C:endoplasmic reticulum exit site"/>
    <property type="evidence" value="ECO:0007669"/>
    <property type="project" value="TreeGrafter"/>
</dbReference>
<dbReference type="GO" id="GO:0005789">
    <property type="term" value="C:endoplasmic reticulum membrane"/>
    <property type="evidence" value="ECO:0007669"/>
    <property type="project" value="UniProtKB-SubCell"/>
</dbReference>
<dbReference type="GO" id="GO:0005198">
    <property type="term" value="F:structural molecule activity"/>
    <property type="evidence" value="ECO:0007669"/>
    <property type="project" value="TreeGrafter"/>
</dbReference>
<dbReference type="GO" id="GO:0090110">
    <property type="term" value="P:COPII-coated vesicle cargo loading"/>
    <property type="evidence" value="ECO:0007669"/>
    <property type="project" value="TreeGrafter"/>
</dbReference>
<dbReference type="GO" id="GO:0007029">
    <property type="term" value="P:endoplasmic reticulum organization"/>
    <property type="evidence" value="ECO:0007669"/>
    <property type="project" value="TreeGrafter"/>
</dbReference>
<dbReference type="GO" id="GO:0015031">
    <property type="term" value="P:protein transport"/>
    <property type="evidence" value="ECO:0007669"/>
    <property type="project" value="UniProtKB-KW"/>
</dbReference>
<dbReference type="FunFam" id="1.20.940.10:FF:000007">
    <property type="entry name" value="Protein transport protein (SEC31), putative"/>
    <property type="match status" value="1"/>
</dbReference>
<dbReference type="FunFam" id="2.130.10.10:FF:000193">
    <property type="entry name" value="Protein transport protein SEC31, putative"/>
    <property type="match status" value="1"/>
</dbReference>
<dbReference type="Gene3D" id="1.25.40.1030">
    <property type="match status" value="1"/>
</dbReference>
<dbReference type="Gene3D" id="1.20.940.10">
    <property type="entry name" value="Functional domain of the splicing factor Prp18"/>
    <property type="match status" value="1"/>
</dbReference>
<dbReference type="Gene3D" id="2.130.10.10">
    <property type="entry name" value="YVTN repeat-like/Quinoprotein amine dehydrogenase"/>
    <property type="match status" value="1"/>
</dbReference>
<dbReference type="InterPro" id="IPR024298">
    <property type="entry name" value="Sec16_Sec23-bd"/>
</dbReference>
<dbReference type="InterPro" id="IPR040251">
    <property type="entry name" value="SEC31-like"/>
</dbReference>
<dbReference type="InterPro" id="IPR009917">
    <property type="entry name" value="SRA1/Sec31"/>
</dbReference>
<dbReference type="InterPro" id="IPR015943">
    <property type="entry name" value="WD40/YVTN_repeat-like_dom_sf"/>
</dbReference>
<dbReference type="InterPro" id="IPR036322">
    <property type="entry name" value="WD40_repeat_dom_sf"/>
</dbReference>
<dbReference type="InterPro" id="IPR001680">
    <property type="entry name" value="WD40_rpt"/>
</dbReference>
<dbReference type="PANTHER" id="PTHR13923">
    <property type="entry name" value="SEC31-RELATED PROTEIN"/>
    <property type="match status" value="1"/>
</dbReference>
<dbReference type="PANTHER" id="PTHR13923:SF11">
    <property type="entry name" value="SECRETORY 31, ISOFORM D"/>
    <property type="match status" value="1"/>
</dbReference>
<dbReference type="Pfam" id="PF07304">
    <property type="entry name" value="SRA1"/>
    <property type="match status" value="1"/>
</dbReference>
<dbReference type="Pfam" id="PF12931">
    <property type="entry name" value="TPR_Sec16"/>
    <property type="match status" value="1"/>
</dbReference>
<dbReference type="Pfam" id="PF00400">
    <property type="entry name" value="WD40"/>
    <property type="match status" value="1"/>
</dbReference>
<dbReference type="PRINTS" id="PR01217">
    <property type="entry name" value="PRICHEXTENSN"/>
</dbReference>
<dbReference type="SMART" id="SM00320">
    <property type="entry name" value="WD40"/>
    <property type="match status" value="5"/>
</dbReference>
<dbReference type="SUPFAM" id="SSF50978">
    <property type="entry name" value="WD40 repeat-like"/>
    <property type="match status" value="1"/>
</dbReference>
<dbReference type="PROSITE" id="PS50082">
    <property type="entry name" value="WD_REPEATS_2"/>
    <property type="match status" value="2"/>
</dbReference>
<dbReference type="PROSITE" id="PS50294">
    <property type="entry name" value="WD_REPEATS_REGION"/>
    <property type="match status" value="1"/>
</dbReference>